<comment type="function">
    <text evidence="2">Photosystem II (PSII) is a light-driven water:plastoquinone oxidoreductase that uses light energy to abstract electrons from H(2)O, generating O(2) and a proton gradient subsequently used for ATP formation. It consists of a core antenna complex that captures photons, and an electron transfer chain that converts photonic excitation into a charge separation. The D1/D2 (PsbA/PsbD) reaction center heterodimer binds P680, the primary electron donor of PSII as well as several subsequent electron acceptors. D2 is needed for assembly of a stable PSII complex.</text>
</comment>
<comment type="catalytic activity">
    <reaction evidence="2">
        <text>2 a plastoquinone + 4 hnu + 2 H2O = 2 a plastoquinol + O2</text>
        <dbReference type="Rhea" id="RHEA:36359"/>
        <dbReference type="Rhea" id="RHEA-COMP:9561"/>
        <dbReference type="Rhea" id="RHEA-COMP:9562"/>
        <dbReference type="ChEBI" id="CHEBI:15377"/>
        <dbReference type="ChEBI" id="CHEBI:15379"/>
        <dbReference type="ChEBI" id="CHEBI:17757"/>
        <dbReference type="ChEBI" id="CHEBI:30212"/>
        <dbReference type="ChEBI" id="CHEBI:62192"/>
        <dbReference type="EC" id="1.10.3.9"/>
    </reaction>
</comment>
<comment type="cofactor">
    <text evidence="2">The D1/D2 heterodimer binds P680, chlorophylls that are the primary electron donor of PSII, and subsequent electron acceptors. It shares a non-heme iron and each subunit binds pheophytin, quinone, additional chlorophylls, carotenoids and lipids. There is also a Cl(-1) ion associated with D1 and D2, which is required for oxygen evolution. The PSII complex binds additional chlorophylls, carotenoids and specific lipids.</text>
</comment>
<comment type="subunit">
    <text evidence="2">PSII is composed of 1 copy each of membrane proteins PsbA, PsbB, PsbC, PsbD, PsbE, PsbF, PsbH, PsbI, PsbJ, PsbK, PsbL, PsbM, PsbT, PsbX, PsbY, PsbZ, Psb30/Ycf12, at least 3 peripheral proteins of the oxygen-evolving complex and a large number of cofactors. It forms dimeric complexes.</text>
</comment>
<comment type="subcellular location">
    <subcellularLocation>
        <location evidence="2">Plastid</location>
        <location evidence="2">Chloroplast thylakoid membrane</location>
        <topology evidence="2">Multi-pass membrane protein</topology>
    </subcellularLocation>
</comment>
<comment type="miscellaneous">
    <text evidence="2">2 of the reaction center chlorophylls (ChlD1 and ChlD2) are entirely coordinated by water.</text>
</comment>
<comment type="similarity">
    <text evidence="2">Belongs to the reaction center PufL/M/PsbA/D family.</text>
</comment>
<evidence type="ECO:0000250" key="1">
    <source>
        <dbReference type="UniProtKB" id="P56761"/>
    </source>
</evidence>
<evidence type="ECO:0000255" key="2">
    <source>
        <dbReference type="HAMAP-Rule" id="MF_01383"/>
    </source>
</evidence>
<feature type="initiator methionine" description="Removed" evidence="1">
    <location>
        <position position="1"/>
    </location>
</feature>
<feature type="chain" id="PRO_0000359640" description="Photosystem II D2 protein">
    <location>
        <begin position="2"/>
        <end position="353"/>
    </location>
</feature>
<feature type="transmembrane region" description="Helical" evidence="2">
    <location>
        <begin position="41"/>
        <end position="61"/>
    </location>
</feature>
<feature type="transmembrane region" description="Helical" evidence="2">
    <location>
        <begin position="125"/>
        <end position="141"/>
    </location>
</feature>
<feature type="transmembrane region" description="Helical" evidence="2">
    <location>
        <begin position="153"/>
        <end position="166"/>
    </location>
</feature>
<feature type="transmembrane region" description="Helical" evidence="2">
    <location>
        <begin position="208"/>
        <end position="228"/>
    </location>
</feature>
<feature type="transmembrane region" description="Helical" evidence="2">
    <location>
        <begin position="279"/>
        <end position="295"/>
    </location>
</feature>
<feature type="binding site" description="axial binding residue" evidence="2">
    <location>
        <position position="118"/>
    </location>
    <ligand>
        <name>chlorophyll a</name>
        <dbReference type="ChEBI" id="CHEBI:58416"/>
        <label>ChlzD2</label>
    </ligand>
    <ligandPart>
        <name>Mg</name>
        <dbReference type="ChEBI" id="CHEBI:25107"/>
    </ligandPart>
</feature>
<feature type="binding site" evidence="2">
    <location>
        <position position="130"/>
    </location>
    <ligand>
        <name>pheophytin a</name>
        <dbReference type="ChEBI" id="CHEBI:136840"/>
        <label>D2</label>
    </ligand>
</feature>
<feature type="binding site" evidence="2">
    <location>
        <position position="143"/>
    </location>
    <ligand>
        <name>pheophytin a</name>
        <dbReference type="ChEBI" id="CHEBI:136840"/>
        <label>D2</label>
    </ligand>
</feature>
<feature type="binding site" description="axial binding residue" evidence="2">
    <location>
        <position position="198"/>
    </location>
    <ligand>
        <name>chlorophyll a</name>
        <dbReference type="ChEBI" id="CHEBI:58416"/>
        <label>PD2</label>
    </ligand>
    <ligandPart>
        <name>Mg</name>
        <dbReference type="ChEBI" id="CHEBI:25107"/>
    </ligandPart>
</feature>
<feature type="binding site" evidence="2">
    <location>
        <position position="215"/>
    </location>
    <ligand>
        <name>a plastoquinone</name>
        <dbReference type="ChEBI" id="CHEBI:17757"/>
        <label>Q(A)</label>
    </ligand>
</feature>
<feature type="binding site" evidence="2">
    <location>
        <position position="215"/>
    </location>
    <ligand>
        <name>Fe cation</name>
        <dbReference type="ChEBI" id="CHEBI:24875"/>
        <note>ligand shared with heterodimeric partner</note>
    </ligand>
</feature>
<feature type="binding site" evidence="2">
    <location>
        <position position="262"/>
    </location>
    <ligand>
        <name>a plastoquinone</name>
        <dbReference type="ChEBI" id="CHEBI:17757"/>
        <label>Q(A)</label>
    </ligand>
</feature>
<feature type="binding site" evidence="2">
    <location>
        <position position="269"/>
    </location>
    <ligand>
        <name>Fe cation</name>
        <dbReference type="ChEBI" id="CHEBI:24875"/>
        <note>ligand shared with heterodimeric partner</note>
    </ligand>
</feature>
<feature type="modified residue" description="N-acetylthreonine" evidence="1">
    <location>
        <position position="2"/>
    </location>
</feature>
<feature type="modified residue" description="Phosphothreonine" evidence="1">
    <location>
        <position position="2"/>
    </location>
</feature>
<name>PSBD_CUCSA</name>
<dbReference type="EC" id="1.10.3.9" evidence="2"/>
<dbReference type="EMBL" id="DQ119058">
    <property type="protein sequence ID" value="AAZ94646.1"/>
    <property type="molecule type" value="Genomic_DNA"/>
</dbReference>
<dbReference type="EMBL" id="DQ865975">
    <property type="protein sequence ID" value="ABI97412.1"/>
    <property type="molecule type" value="Genomic_DNA"/>
</dbReference>
<dbReference type="EMBL" id="DQ865976">
    <property type="protein sequence ID" value="ABI98741.1"/>
    <property type="molecule type" value="Genomic_DNA"/>
</dbReference>
<dbReference type="EMBL" id="AJ970307">
    <property type="protein sequence ID" value="CAJ00753.1"/>
    <property type="molecule type" value="Genomic_DNA"/>
</dbReference>
<dbReference type="RefSeq" id="YP_247594.1">
    <property type="nucleotide sequence ID" value="NC_007144.1"/>
</dbReference>
<dbReference type="SMR" id="Q4VZN8"/>
<dbReference type="GeneID" id="3429278"/>
<dbReference type="KEGG" id="csv:3429278"/>
<dbReference type="OrthoDB" id="1924410at2759"/>
<dbReference type="GO" id="GO:0009535">
    <property type="term" value="C:chloroplast thylakoid membrane"/>
    <property type="evidence" value="ECO:0007669"/>
    <property type="project" value="UniProtKB-SubCell"/>
</dbReference>
<dbReference type="GO" id="GO:0009523">
    <property type="term" value="C:photosystem II"/>
    <property type="evidence" value="ECO:0007669"/>
    <property type="project" value="UniProtKB-KW"/>
</dbReference>
<dbReference type="GO" id="GO:0016168">
    <property type="term" value="F:chlorophyll binding"/>
    <property type="evidence" value="ECO:0007669"/>
    <property type="project" value="UniProtKB-UniRule"/>
</dbReference>
<dbReference type="GO" id="GO:0045156">
    <property type="term" value="F:electron transporter, transferring electrons within the cyclic electron transport pathway of photosynthesis activity"/>
    <property type="evidence" value="ECO:0007669"/>
    <property type="project" value="InterPro"/>
</dbReference>
<dbReference type="GO" id="GO:0005506">
    <property type="term" value="F:iron ion binding"/>
    <property type="evidence" value="ECO:0007669"/>
    <property type="project" value="UniProtKB-UniRule"/>
</dbReference>
<dbReference type="GO" id="GO:0010242">
    <property type="term" value="F:oxygen evolving activity"/>
    <property type="evidence" value="ECO:0007669"/>
    <property type="project" value="UniProtKB-EC"/>
</dbReference>
<dbReference type="GO" id="GO:0009772">
    <property type="term" value="P:photosynthetic electron transport in photosystem II"/>
    <property type="evidence" value="ECO:0007669"/>
    <property type="project" value="InterPro"/>
</dbReference>
<dbReference type="CDD" id="cd09288">
    <property type="entry name" value="Photosystem-II_D2"/>
    <property type="match status" value="1"/>
</dbReference>
<dbReference type="FunFam" id="1.20.85.10:FF:000001">
    <property type="entry name" value="photosystem II D2 protein-like"/>
    <property type="match status" value="1"/>
</dbReference>
<dbReference type="Gene3D" id="1.20.85.10">
    <property type="entry name" value="Photosystem II protein D1-like"/>
    <property type="match status" value="1"/>
</dbReference>
<dbReference type="HAMAP" id="MF_01383">
    <property type="entry name" value="PSII_PsbD_D2"/>
    <property type="match status" value="1"/>
</dbReference>
<dbReference type="InterPro" id="IPR055266">
    <property type="entry name" value="D1/D2"/>
</dbReference>
<dbReference type="InterPro" id="IPR036854">
    <property type="entry name" value="Photo_II_D1/D2_sf"/>
</dbReference>
<dbReference type="InterPro" id="IPR000484">
    <property type="entry name" value="Photo_RC_L/M"/>
</dbReference>
<dbReference type="InterPro" id="IPR055265">
    <property type="entry name" value="Photo_RC_L/M_CS"/>
</dbReference>
<dbReference type="InterPro" id="IPR005868">
    <property type="entry name" value="PSII_PsbD/D2"/>
</dbReference>
<dbReference type="NCBIfam" id="TIGR01152">
    <property type="entry name" value="psbD"/>
    <property type="match status" value="1"/>
</dbReference>
<dbReference type="PANTHER" id="PTHR33149:SF12">
    <property type="entry name" value="PHOTOSYSTEM II D2 PROTEIN"/>
    <property type="match status" value="1"/>
</dbReference>
<dbReference type="PANTHER" id="PTHR33149">
    <property type="entry name" value="PHOTOSYSTEM II PROTEIN D1"/>
    <property type="match status" value="1"/>
</dbReference>
<dbReference type="Pfam" id="PF00124">
    <property type="entry name" value="Photo_RC"/>
    <property type="match status" value="1"/>
</dbReference>
<dbReference type="PRINTS" id="PR00256">
    <property type="entry name" value="REACTNCENTRE"/>
</dbReference>
<dbReference type="SUPFAM" id="SSF81483">
    <property type="entry name" value="Bacterial photosystem II reaction centre, L and M subunits"/>
    <property type="match status" value="1"/>
</dbReference>
<dbReference type="PROSITE" id="PS00244">
    <property type="entry name" value="REACTION_CENTER"/>
    <property type="match status" value="1"/>
</dbReference>
<accession>Q4VZN8</accession>
<protein>
    <recommendedName>
        <fullName evidence="2">Photosystem II D2 protein</fullName>
        <shortName evidence="2">PSII D2 protein</shortName>
        <ecNumber evidence="2">1.10.3.9</ecNumber>
    </recommendedName>
    <alternativeName>
        <fullName evidence="2">Photosystem Q(A) protein</fullName>
    </alternativeName>
</protein>
<organism>
    <name type="scientific">Cucumis sativus</name>
    <name type="common">Cucumber</name>
    <dbReference type="NCBI Taxonomy" id="3659"/>
    <lineage>
        <taxon>Eukaryota</taxon>
        <taxon>Viridiplantae</taxon>
        <taxon>Streptophyta</taxon>
        <taxon>Embryophyta</taxon>
        <taxon>Tracheophyta</taxon>
        <taxon>Spermatophyta</taxon>
        <taxon>Magnoliopsida</taxon>
        <taxon>eudicotyledons</taxon>
        <taxon>Gunneridae</taxon>
        <taxon>Pentapetalae</taxon>
        <taxon>rosids</taxon>
        <taxon>fabids</taxon>
        <taxon>Cucurbitales</taxon>
        <taxon>Cucurbitaceae</taxon>
        <taxon>Benincaseae</taxon>
        <taxon>Cucumis</taxon>
    </lineage>
</organism>
<gene>
    <name evidence="2" type="primary">psbD</name>
    <name type="ordered locus">CsCp026</name>
</gene>
<proteinExistence type="inferred from homology"/>
<reference key="1">
    <citation type="journal article" date="2006" name="Plant Cell Rep.">
        <title>Complete sequence and organization of the cucumber (Cucumis sativus L. cv. Baekmibaekdadagi) chloroplast genome.</title>
        <authorList>
            <person name="Kim J.-S."/>
            <person name="Jung J.D."/>
            <person name="Lee J.-A."/>
            <person name="Park H.-W."/>
            <person name="Oh K.-H."/>
            <person name="Jeong W.J."/>
            <person name="Choi D.-W."/>
            <person name="Liu J.R."/>
            <person name="Cho K.Y."/>
        </authorList>
    </citation>
    <scope>NUCLEOTIDE SEQUENCE [LARGE SCALE GENOMIC DNA]</scope>
    <source>
        <strain>cv. Baekmibaekdadagi</strain>
    </source>
</reference>
<reference key="2">
    <citation type="journal article" date="2007" name="Cell. Mol. Biol. Lett.">
        <title>The complete structure of the cucumber (Cucumis sativus L.) chloroplast genome: its composition and comparative analysis.</title>
        <authorList>
            <person name="Plader W.W."/>
            <person name="Yukawa Y."/>
            <person name="Sugiura M."/>
            <person name="Malepszy S."/>
        </authorList>
    </citation>
    <scope>NUCLEOTIDE SEQUENCE [LARGE SCALE GENOMIC DNA]</scope>
    <source>
        <strain>cv. Borszczagowski</strain>
    </source>
</reference>
<reference key="3">
    <citation type="journal article" date="2007" name="Genome">
        <title>Sequencing cucumber (Cucumis sativus L.) chloroplast genomes identifies differences between chilling-tolerant and -susceptible cucumber lines.</title>
        <authorList>
            <person name="Chung S.-M."/>
            <person name="Gordon V.S."/>
            <person name="Staub J.E."/>
        </authorList>
    </citation>
    <scope>NUCLEOTIDE SEQUENCE [LARGE SCALE GENOMIC DNA]</scope>
    <source>
        <strain>cv. Chipper</strain>
        <strain>cv. Gy14</strain>
    </source>
</reference>
<sequence length="353" mass="39521">MTIAVGKFTKDENDLFDIMDDWLRRDRFVFVGWSGLLLFPCAYFAVGGWFTGTTFVTSWYTHGLASSYLEGCNFLTAAVSTPANSLAHSLLLLWGPEAQGDFTRWCQLGGLWTFVALHGAFGLIGFMLRQFELARSVQLRPYNAIAFSGPIAVFVSVFLIYPLGQSGWFFAPSFGVAAIFRFILFFQGFHNWTLNPFHMMGVAGVLGAALLCAIHGATVENTLFEDGDGANTFRAFNPTQAEETYSMVTANRFWSQIFGVAFSNKRWLHFFMLFVPVTGLWMSALGVVGLALNLRAYDFVSQEIRAAEDPEFETFYTKNILLNEGIRAWMAAQDQPHENLIFPEEVLPRGNAL</sequence>
<geneLocation type="chloroplast"/>
<keyword id="KW-0007">Acetylation</keyword>
<keyword id="KW-0148">Chlorophyll</keyword>
<keyword id="KW-0150">Chloroplast</keyword>
<keyword id="KW-0157">Chromophore</keyword>
<keyword id="KW-0249">Electron transport</keyword>
<keyword id="KW-0408">Iron</keyword>
<keyword id="KW-0460">Magnesium</keyword>
<keyword id="KW-0472">Membrane</keyword>
<keyword id="KW-0479">Metal-binding</keyword>
<keyword id="KW-0560">Oxidoreductase</keyword>
<keyword id="KW-0597">Phosphoprotein</keyword>
<keyword id="KW-0602">Photosynthesis</keyword>
<keyword id="KW-0604">Photosystem II</keyword>
<keyword id="KW-0934">Plastid</keyword>
<keyword id="KW-0793">Thylakoid</keyword>
<keyword id="KW-0812">Transmembrane</keyword>
<keyword id="KW-1133">Transmembrane helix</keyword>
<keyword id="KW-0813">Transport</keyword>